<keyword id="KW-1185">Reference proteome</keyword>
<keyword id="KW-0964">Secreted</keyword>
<comment type="subcellular location">
    <subcellularLocation>
        <location evidence="1">Secreted</location>
    </subcellularLocation>
    <text evidence="1">Probably secreted via the ESX / type VII secretion system (T7SS).</text>
</comment>
<comment type="induction">
    <text evidence="2">Transcriptionally regulated by the sigma factor SigM.</text>
</comment>
<comment type="similarity">
    <text evidence="4">Belongs to the WXG100 family. CFP-10 subfamily.</text>
</comment>
<name>ESXF_MYCTO</name>
<proteinExistence type="evidence at transcript level"/>
<protein>
    <recommendedName>
        <fullName evidence="1">ESAT-6-like protein EsxF</fullName>
    </recommendedName>
</protein>
<gene>
    <name evidence="3" type="primary">esxF</name>
    <name type="ordered locus">MT4024</name>
</gene>
<accession>P9WNH6</accession>
<accession>L0TE47</accession>
<accession>O05440</accession>
<reference key="1">
    <citation type="journal article" date="2002" name="J. Bacteriol.">
        <title>Whole-genome comparison of Mycobacterium tuberculosis clinical and laboratory strains.</title>
        <authorList>
            <person name="Fleischmann R.D."/>
            <person name="Alland D."/>
            <person name="Eisen J.A."/>
            <person name="Carpenter L."/>
            <person name="White O."/>
            <person name="Peterson J.D."/>
            <person name="DeBoy R.T."/>
            <person name="Dodson R.J."/>
            <person name="Gwinn M.L."/>
            <person name="Haft D.H."/>
            <person name="Hickey E.K."/>
            <person name="Kolonay J.F."/>
            <person name="Nelson W.C."/>
            <person name="Umayam L.A."/>
            <person name="Ermolaeva M.D."/>
            <person name="Salzberg S.L."/>
            <person name="Delcher A."/>
            <person name="Utterback T.R."/>
            <person name="Weidman J.F."/>
            <person name="Khouri H.M."/>
            <person name="Gill J."/>
            <person name="Mikula A."/>
            <person name="Bishai W."/>
            <person name="Jacobs W.R. Jr."/>
            <person name="Venter J.C."/>
            <person name="Fraser C.M."/>
        </authorList>
    </citation>
    <scope>NUCLEOTIDE SEQUENCE [LARGE SCALE GENOMIC DNA]</scope>
    <source>
        <strain>CDC 1551 / Oshkosh</strain>
    </source>
</reference>
<reference key="2">
    <citation type="journal article" date="2007" name="Infect. Immun.">
        <title>Characterization of the Mycobacterium tuberculosis sigma factor SigM by assessment of virulence and identification of SigM-dependent genes.</title>
        <authorList>
            <person name="Agarwal N."/>
            <person name="Woolwine S.C."/>
            <person name="Tyagi S."/>
            <person name="Bishai W.R."/>
        </authorList>
    </citation>
    <scope>INDUCTION</scope>
    <source>
        <strain>CDC 1551 / Oshkosh</strain>
    </source>
</reference>
<sequence length="103" mass="10460">MGADDTLRVEPAVMQGFAASLDGAAEHLAVQLAELDAQVGQMLGGWRGASGSAYGSAWELWHRGAGEVQLGLSMLAAAIAHAGAGYQHNETASAQVLREVGGG</sequence>
<feature type="chain" id="PRO_0000427125" description="ESAT-6-like protein EsxF">
    <location>
        <begin position="1"/>
        <end position="103"/>
    </location>
</feature>
<organism>
    <name type="scientific">Mycobacterium tuberculosis (strain CDC 1551 / Oshkosh)</name>
    <dbReference type="NCBI Taxonomy" id="83331"/>
    <lineage>
        <taxon>Bacteria</taxon>
        <taxon>Bacillati</taxon>
        <taxon>Actinomycetota</taxon>
        <taxon>Actinomycetes</taxon>
        <taxon>Mycobacteriales</taxon>
        <taxon>Mycobacteriaceae</taxon>
        <taxon>Mycobacterium</taxon>
        <taxon>Mycobacterium tuberculosis complex</taxon>
    </lineage>
</organism>
<dbReference type="EMBL" id="AE000516">
    <property type="protein sequence ID" value="AAK48388.1"/>
    <property type="molecule type" value="Genomic_DNA"/>
</dbReference>
<dbReference type="PIR" id="B70600">
    <property type="entry name" value="B70600"/>
</dbReference>
<dbReference type="RefSeq" id="WP_003400100.1">
    <property type="nucleotide sequence ID" value="NZ_KK341228.1"/>
</dbReference>
<dbReference type="SMR" id="P9WNH6"/>
<dbReference type="GeneID" id="45427905"/>
<dbReference type="KEGG" id="mtc:MT4024"/>
<dbReference type="PATRIC" id="fig|83331.31.peg.4329"/>
<dbReference type="HOGENOM" id="CLU_157917_0_0_11"/>
<dbReference type="Proteomes" id="UP000001020">
    <property type="component" value="Chromosome"/>
</dbReference>
<dbReference type="GO" id="GO:0005576">
    <property type="term" value="C:extracellular region"/>
    <property type="evidence" value="ECO:0007669"/>
    <property type="project" value="UniProtKB-SubCell"/>
</dbReference>
<dbReference type="Gene3D" id="1.10.287.1060">
    <property type="entry name" value="ESAT-6-like"/>
    <property type="match status" value="1"/>
</dbReference>
<dbReference type="InterPro" id="IPR036689">
    <property type="entry name" value="ESAT-6-like_sf"/>
</dbReference>
<dbReference type="InterPro" id="IPR010310">
    <property type="entry name" value="T7SS_ESAT-6-like"/>
</dbReference>
<dbReference type="NCBIfam" id="TIGR03930">
    <property type="entry name" value="WXG100_ESAT6"/>
    <property type="match status" value="1"/>
</dbReference>
<dbReference type="Pfam" id="PF06013">
    <property type="entry name" value="WXG100"/>
    <property type="match status" value="1"/>
</dbReference>
<dbReference type="SUPFAM" id="SSF140453">
    <property type="entry name" value="EsxAB dimer-like"/>
    <property type="match status" value="1"/>
</dbReference>
<evidence type="ECO:0000250" key="1">
    <source>
        <dbReference type="UniProtKB" id="P9WNH7"/>
    </source>
</evidence>
<evidence type="ECO:0000269" key="2">
    <source>
    </source>
</evidence>
<evidence type="ECO:0000303" key="3">
    <source>
    </source>
</evidence>
<evidence type="ECO:0000305" key="4"/>